<organism>
    <name type="scientific">Caenorhabditis elegans</name>
    <dbReference type="NCBI Taxonomy" id="6239"/>
    <lineage>
        <taxon>Eukaryota</taxon>
        <taxon>Metazoa</taxon>
        <taxon>Ecdysozoa</taxon>
        <taxon>Nematoda</taxon>
        <taxon>Chromadorea</taxon>
        <taxon>Rhabditida</taxon>
        <taxon>Rhabditina</taxon>
        <taxon>Rhabditomorpha</taxon>
        <taxon>Rhabditoidea</taxon>
        <taxon>Rhabditidae</taxon>
        <taxon>Peloderinae</taxon>
        <taxon>Caenorhabditis</taxon>
    </lineage>
</organism>
<protein>
    <recommendedName>
        <fullName evidence="5">Leishmanolysin-like peptidase</fullName>
        <ecNumber evidence="3">3.4.24.-</ecNumber>
    </recommendedName>
</protein>
<dbReference type="EC" id="3.4.24.-" evidence="3"/>
<dbReference type="EMBL" id="Z99271">
    <property type="protein sequence ID" value="CAB16471.1"/>
    <property type="molecule type" value="Genomic_DNA"/>
</dbReference>
<dbReference type="PIR" id="T26835">
    <property type="entry name" value="T26835"/>
</dbReference>
<dbReference type="RefSeq" id="NP_001022870.1">
    <property type="nucleotide sequence ID" value="NM_001027699.6"/>
</dbReference>
<dbReference type="SMR" id="O62446"/>
<dbReference type="FunCoup" id="O62446">
    <property type="interactions" value="1614"/>
</dbReference>
<dbReference type="STRING" id="6239.Y43F4A.1a.1"/>
<dbReference type="PaxDb" id="6239-Y43F4A.1a"/>
<dbReference type="EnsemblMetazoa" id="Y43F4A.1a.1">
    <property type="protein sequence ID" value="Y43F4A.1a.1"/>
    <property type="gene ID" value="WBGene00012796"/>
</dbReference>
<dbReference type="GeneID" id="176737"/>
<dbReference type="KEGG" id="cel:CELE_Y43F4A.1"/>
<dbReference type="UCSC" id="Y43F4A.1b">
    <property type="organism name" value="c. elegans"/>
</dbReference>
<dbReference type="AGR" id="WB:WBGene00012796"/>
<dbReference type="CTD" id="176737"/>
<dbReference type="WormBase" id="Y43F4A.1a">
    <property type="protein sequence ID" value="CE16622"/>
    <property type="gene ID" value="WBGene00012796"/>
</dbReference>
<dbReference type="eggNOG" id="KOG2556">
    <property type="taxonomic scope" value="Eukaryota"/>
</dbReference>
<dbReference type="HOGENOM" id="CLU_023820_1_0_1"/>
<dbReference type="InParanoid" id="O62446"/>
<dbReference type="OMA" id="MVRHHVH"/>
<dbReference type="OrthoDB" id="527990at2759"/>
<dbReference type="PhylomeDB" id="O62446"/>
<dbReference type="PRO" id="PR:O62446"/>
<dbReference type="Proteomes" id="UP000001940">
    <property type="component" value="Chromosome III"/>
</dbReference>
<dbReference type="Bgee" id="WBGene00012796">
    <property type="expression patterns" value="Expressed in pharyngeal muscle cell (C elegans) and 3 other cell types or tissues"/>
</dbReference>
<dbReference type="ExpressionAtlas" id="O62446">
    <property type="expression patterns" value="baseline and differential"/>
</dbReference>
<dbReference type="GO" id="GO:0005737">
    <property type="term" value="C:cytoplasm"/>
    <property type="evidence" value="ECO:0000318"/>
    <property type="project" value="GO_Central"/>
</dbReference>
<dbReference type="GO" id="GO:0016020">
    <property type="term" value="C:membrane"/>
    <property type="evidence" value="ECO:0007669"/>
    <property type="project" value="InterPro"/>
</dbReference>
<dbReference type="GO" id="GO:0046872">
    <property type="term" value="F:metal ion binding"/>
    <property type="evidence" value="ECO:0007669"/>
    <property type="project" value="UniProtKB-KW"/>
</dbReference>
<dbReference type="GO" id="GO:0004222">
    <property type="term" value="F:metalloendopeptidase activity"/>
    <property type="evidence" value="ECO:0007669"/>
    <property type="project" value="InterPro"/>
</dbReference>
<dbReference type="GO" id="GO:0008233">
    <property type="term" value="F:peptidase activity"/>
    <property type="evidence" value="ECO:0000318"/>
    <property type="project" value="GO_Central"/>
</dbReference>
<dbReference type="GO" id="GO:0007155">
    <property type="term" value="P:cell adhesion"/>
    <property type="evidence" value="ECO:0007669"/>
    <property type="project" value="InterPro"/>
</dbReference>
<dbReference type="GO" id="GO:0051301">
    <property type="term" value="P:cell division"/>
    <property type="evidence" value="ECO:0007669"/>
    <property type="project" value="UniProtKB-KW"/>
</dbReference>
<dbReference type="GO" id="GO:0006508">
    <property type="term" value="P:proteolysis"/>
    <property type="evidence" value="ECO:0007669"/>
    <property type="project" value="UniProtKB-KW"/>
</dbReference>
<dbReference type="FunFam" id="2.10.55.10:FF:000005">
    <property type="entry name" value="Leishmanolysin-like peptidase"/>
    <property type="match status" value="1"/>
</dbReference>
<dbReference type="FunFam" id="2.30.34.10:FF:000002">
    <property type="entry name" value="Leishmanolysin-like peptidase"/>
    <property type="match status" value="1"/>
</dbReference>
<dbReference type="FunFam" id="3.10.170.20:FF:000007">
    <property type="entry name" value="Leishmanolysin-like peptidase"/>
    <property type="match status" value="1"/>
</dbReference>
<dbReference type="FunFam" id="3.90.132.10:FF:000001">
    <property type="entry name" value="leishmanolysin-like peptidase isoform X2"/>
    <property type="match status" value="1"/>
</dbReference>
<dbReference type="Gene3D" id="3.10.170.20">
    <property type="match status" value="1"/>
</dbReference>
<dbReference type="Gene3D" id="3.90.132.10">
    <property type="entry name" value="Leishmanolysin , domain 2"/>
    <property type="match status" value="1"/>
</dbReference>
<dbReference type="Gene3D" id="2.10.55.10">
    <property type="entry name" value="Leishmanolysin domain 3"/>
    <property type="match status" value="1"/>
</dbReference>
<dbReference type="Gene3D" id="2.30.34.10">
    <property type="entry name" value="Leishmanolysin domain 4"/>
    <property type="match status" value="1"/>
</dbReference>
<dbReference type="InterPro" id="IPR001577">
    <property type="entry name" value="Peptidase_M8"/>
</dbReference>
<dbReference type="PANTHER" id="PTHR10942">
    <property type="entry name" value="LEISHMANOLYSIN-LIKE PEPTIDASE"/>
    <property type="match status" value="1"/>
</dbReference>
<dbReference type="PANTHER" id="PTHR10942:SF0">
    <property type="entry name" value="LEISHMANOLYSIN-LIKE PEPTIDASE"/>
    <property type="match status" value="1"/>
</dbReference>
<dbReference type="Pfam" id="PF01457">
    <property type="entry name" value="Peptidase_M8"/>
    <property type="match status" value="1"/>
</dbReference>
<dbReference type="SUPFAM" id="SSF55486">
    <property type="entry name" value="Metalloproteases ('zincins'), catalytic domain"/>
    <property type="match status" value="1"/>
</dbReference>
<feature type="chain" id="PRO_0000303079" description="Leishmanolysin-like peptidase">
    <location>
        <begin position="1"/>
        <end position="663"/>
    </location>
</feature>
<feature type="active site" evidence="4">
    <location>
        <position position="247"/>
    </location>
</feature>
<feature type="binding site" evidence="4">
    <location>
        <position position="246"/>
    </location>
    <ligand>
        <name>Zn(2+)</name>
        <dbReference type="ChEBI" id="CHEBI:29105"/>
        <note>catalytic</note>
    </ligand>
</feature>
<feature type="binding site" evidence="4">
    <location>
        <position position="250"/>
    </location>
    <ligand>
        <name>Zn(2+)</name>
        <dbReference type="ChEBI" id="CHEBI:29105"/>
        <note>catalytic</note>
    </ligand>
</feature>
<feature type="binding site" evidence="4">
    <location>
        <position position="353"/>
    </location>
    <ligand>
        <name>Zn(2+)</name>
        <dbReference type="ChEBI" id="CHEBI:29105"/>
        <note>catalytic</note>
    </ligand>
</feature>
<gene>
    <name type="ORF">Y43F4A.1</name>
</gene>
<name>LMLN_CAEEL</name>
<sequence>MKPRLIFIFFACYFLNFLPFSNQLPCSYQNPRIEDILLEVPIEHEHPHRHRRGLPSSDPTSPPVEKFAPLRIQLHYDKSIQNLTAEVQNFVNTTLLPEAVGYWENALRVRPMTTPIRLRRKCISSFYYYKQGMRNVACDKGCRERTTCGEADIPRDHLLDCLACNNTDDCKTTGELGEGVKDTDFILYVTAHDSKRCEGPETLSYAAHCQQEADFDRPIAGNVNLCPSALSVHNHDYEILTSTVKHEILHALGFSVGLYAFFRDSEGKPRTKRNRYGRPTSLNKQKGYYDWDSNTITTVLRENWWTGEGKVIHPIHMMVTPKVREEARRHFGCDKLEGAELENQGGEGTYLTHWEKRAYENEAMTGTHTQNPVYSRLTLAFLEDTGWYQPNYEVAEDLHWGKQLGCDFAMKSCGEWIHEKKILGEDAYPYCSDIKHDGSKSMAITRCTTQRDSLALCNLVPFQKELPSQYRNFMSLPGVNPDGAKYYGGSVEMADYCPFLQEFEWKLIDKTQHKDSRCELEGNGKEGEDILEVYGANSKCFEFPKPWTERKCGRIRVLSHYMAGCYEHQCTNGTLYVGSYNATDMYPCYAENQKIHIKKVVDGWLREGSLICPKCEDYCTNCGPPIVIPDYIGDPELDEPCSSNFKLSVLAFLCYLIFLHIRS</sequence>
<accession>O62446</accession>
<evidence type="ECO:0000250" key="1"/>
<evidence type="ECO:0000250" key="2">
    <source>
        <dbReference type="UniProtKB" id="P08148"/>
    </source>
</evidence>
<evidence type="ECO:0000250" key="3">
    <source>
        <dbReference type="UniProtKB" id="Q9VH19"/>
    </source>
</evidence>
<evidence type="ECO:0000255" key="4">
    <source>
        <dbReference type="PROSITE-ProRule" id="PRU10095"/>
    </source>
</evidence>
<evidence type="ECO:0000305" key="5"/>
<comment type="function">
    <text evidence="3">Essential for the coordination of mitotic progression, and also plays a role in cell migration.</text>
</comment>
<comment type="cofactor">
    <cofactor evidence="2">
        <name>Zn(2+)</name>
        <dbReference type="ChEBI" id="CHEBI:29105"/>
    </cofactor>
    <text evidence="2">Binds 1 zinc ion per subunit.</text>
</comment>
<comment type="subcellular location">
    <subcellularLocation>
        <location>Cytoplasm</location>
    </subcellularLocation>
    <text evidence="1">Found in ring-like structures resembling invadopodia. In migrating cells it relocalizes from internal structures to the leading edge of cells (By similarity).</text>
</comment>
<comment type="similarity">
    <text evidence="5">Belongs to the peptidase M8 family.</text>
</comment>
<keyword id="KW-0131">Cell cycle</keyword>
<keyword id="KW-0132">Cell division</keyword>
<keyword id="KW-0963">Cytoplasm</keyword>
<keyword id="KW-0378">Hydrolase</keyword>
<keyword id="KW-0479">Metal-binding</keyword>
<keyword id="KW-0482">Metalloprotease</keyword>
<keyword id="KW-0498">Mitosis</keyword>
<keyword id="KW-0645">Protease</keyword>
<keyword id="KW-1185">Reference proteome</keyword>
<keyword id="KW-0862">Zinc</keyword>
<reference key="1">
    <citation type="journal article" date="1998" name="Science">
        <title>Genome sequence of the nematode C. elegans: a platform for investigating biology.</title>
        <authorList>
            <consortium name="The C. elegans sequencing consortium"/>
        </authorList>
    </citation>
    <scope>NUCLEOTIDE SEQUENCE [LARGE SCALE GENOMIC DNA]</scope>
    <source>
        <strain>Bristol N2</strain>
    </source>
</reference>
<proteinExistence type="inferred from homology"/>